<feature type="chain" id="PRO_1000004485" description="ATP phosphoribosyltransferase">
    <location>
        <begin position="1"/>
        <end position="294"/>
    </location>
</feature>
<sequence length="294" mass="32426">MTNSNKVLKLGLPKGSLQDSTLDLFAHAGFHFSVQSRSYFPSIDDDELEAILIRAQEMAHYVQLGAFDVGLTGKDWIIETDADVVEVADLVYSKASMRPVRWVLAVPESSPVKTVKDLEGKHIATEVVNITKKYLAANGVNASVEFSWGATEVKPPDLADAIVEVTETGSSLRANKLRIVETILESNTKLIANRQSWEDPWKREKIESMALLLQGAINAQGKVGLKMNAPKSALEKITSIIPALRQPTVSHLANDQWVALEVIVTEKIVRKLIPELKRAGAEGIFEYDINKLID</sequence>
<dbReference type="EC" id="2.4.2.17" evidence="1"/>
<dbReference type="EMBL" id="CP000096">
    <property type="protein sequence ID" value="ABB23129.1"/>
    <property type="molecule type" value="Genomic_DNA"/>
</dbReference>
<dbReference type="RefSeq" id="WP_011357004.1">
    <property type="nucleotide sequence ID" value="NC_007512.1"/>
</dbReference>
<dbReference type="SMR" id="Q3B6A2"/>
<dbReference type="STRING" id="319225.Plut_0241"/>
<dbReference type="KEGG" id="plt:Plut_0241"/>
<dbReference type="eggNOG" id="COG0040">
    <property type="taxonomic scope" value="Bacteria"/>
</dbReference>
<dbReference type="HOGENOM" id="CLU_038115_1_1_10"/>
<dbReference type="OrthoDB" id="9801867at2"/>
<dbReference type="UniPathway" id="UPA00031">
    <property type="reaction ID" value="UER00006"/>
</dbReference>
<dbReference type="Proteomes" id="UP000002709">
    <property type="component" value="Chromosome"/>
</dbReference>
<dbReference type="GO" id="GO:0005737">
    <property type="term" value="C:cytoplasm"/>
    <property type="evidence" value="ECO:0007669"/>
    <property type="project" value="UniProtKB-SubCell"/>
</dbReference>
<dbReference type="GO" id="GO:0005524">
    <property type="term" value="F:ATP binding"/>
    <property type="evidence" value="ECO:0007669"/>
    <property type="project" value="UniProtKB-KW"/>
</dbReference>
<dbReference type="GO" id="GO:0003879">
    <property type="term" value="F:ATP phosphoribosyltransferase activity"/>
    <property type="evidence" value="ECO:0007669"/>
    <property type="project" value="UniProtKB-UniRule"/>
</dbReference>
<dbReference type="GO" id="GO:0000287">
    <property type="term" value="F:magnesium ion binding"/>
    <property type="evidence" value="ECO:0007669"/>
    <property type="project" value="UniProtKB-UniRule"/>
</dbReference>
<dbReference type="GO" id="GO:0000105">
    <property type="term" value="P:L-histidine biosynthetic process"/>
    <property type="evidence" value="ECO:0007669"/>
    <property type="project" value="UniProtKB-UniRule"/>
</dbReference>
<dbReference type="CDD" id="cd13593">
    <property type="entry name" value="PBP2_HisGL3"/>
    <property type="match status" value="1"/>
</dbReference>
<dbReference type="FunFam" id="3.30.70.120:FF:000002">
    <property type="entry name" value="ATP phosphoribosyltransferase"/>
    <property type="match status" value="1"/>
</dbReference>
<dbReference type="Gene3D" id="3.30.70.120">
    <property type="match status" value="1"/>
</dbReference>
<dbReference type="Gene3D" id="3.40.190.10">
    <property type="entry name" value="Periplasmic binding protein-like II"/>
    <property type="match status" value="2"/>
</dbReference>
<dbReference type="HAMAP" id="MF_00079">
    <property type="entry name" value="HisG_Long"/>
    <property type="match status" value="1"/>
</dbReference>
<dbReference type="InterPro" id="IPR020621">
    <property type="entry name" value="ATP-PRT_HisG_long"/>
</dbReference>
<dbReference type="InterPro" id="IPR013820">
    <property type="entry name" value="ATP_PRibTrfase_cat"/>
</dbReference>
<dbReference type="InterPro" id="IPR001348">
    <property type="entry name" value="ATP_PRibTrfase_HisG"/>
</dbReference>
<dbReference type="InterPro" id="IPR013115">
    <property type="entry name" value="HisG_C"/>
</dbReference>
<dbReference type="InterPro" id="IPR011322">
    <property type="entry name" value="N-reg_PII-like_a/b"/>
</dbReference>
<dbReference type="InterPro" id="IPR015867">
    <property type="entry name" value="N-reg_PII/ATP_PRibTrfase_C"/>
</dbReference>
<dbReference type="NCBIfam" id="TIGR00070">
    <property type="entry name" value="hisG"/>
    <property type="match status" value="1"/>
</dbReference>
<dbReference type="NCBIfam" id="TIGR03455">
    <property type="entry name" value="HisG_C-term"/>
    <property type="match status" value="1"/>
</dbReference>
<dbReference type="PANTHER" id="PTHR21403:SF10">
    <property type="entry name" value="ATP PHOSPHORIBOSYLTRANSFERASE"/>
    <property type="match status" value="1"/>
</dbReference>
<dbReference type="PANTHER" id="PTHR21403">
    <property type="entry name" value="ATP PHOSPHORIBOSYLTRANSFERASE ATP-PRTASE"/>
    <property type="match status" value="1"/>
</dbReference>
<dbReference type="Pfam" id="PF01634">
    <property type="entry name" value="HisG"/>
    <property type="match status" value="1"/>
</dbReference>
<dbReference type="Pfam" id="PF08029">
    <property type="entry name" value="HisG_C"/>
    <property type="match status" value="1"/>
</dbReference>
<dbReference type="SUPFAM" id="SSF54913">
    <property type="entry name" value="GlnB-like"/>
    <property type="match status" value="1"/>
</dbReference>
<dbReference type="SUPFAM" id="SSF53850">
    <property type="entry name" value="Periplasmic binding protein-like II"/>
    <property type="match status" value="1"/>
</dbReference>
<proteinExistence type="inferred from homology"/>
<gene>
    <name evidence="1" type="primary">hisG</name>
    <name type="ordered locus">Plut_0241</name>
</gene>
<accession>Q3B6A2</accession>
<evidence type="ECO:0000255" key="1">
    <source>
        <dbReference type="HAMAP-Rule" id="MF_00079"/>
    </source>
</evidence>
<comment type="function">
    <text evidence="1">Catalyzes the condensation of ATP and 5-phosphoribose 1-diphosphate to form N'-(5'-phosphoribosyl)-ATP (PR-ATP). Has a crucial role in the pathway because the rate of histidine biosynthesis seems to be controlled primarily by regulation of HisG enzymatic activity.</text>
</comment>
<comment type="catalytic activity">
    <reaction evidence="1">
        <text>1-(5-phospho-beta-D-ribosyl)-ATP + diphosphate = 5-phospho-alpha-D-ribose 1-diphosphate + ATP</text>
        <dbReference type="Rhea" id="RHEA:18473"/>
        <dbReference type="ChEBI" id="CHEBI:30616"/>
        <dbReference type="ChEBI" id="CHEBI:33019"/>
        <dbReference type="ChEBI" id="CHEBI:58017"/>
        <dbReference type="ChEBI" id="CHEBI:73183"/>
        <dbReference type="EC" id="2.4.2.17"/>
    </reaction>
</comment>
<comment type="cofactor">
    <cofactor evidence="1">
        <name>Mg(2+)</name>
        <dbReference type="ChEBI" id="CHEBI:18420"/>
    </cofactor>
</comment>
<comment type="activity regulation">
    <text evidence="1">Feedback inhibited by histidine.</text>
</comment>
<comment type="pathway">
    <text evidence="1">Amino-acid biosynthesis; L-histidine biosynthesis; L-histidine from 5-phospho-alpha-D-ribose 1-diphosphate: step 1/9.</text>
</comment>
<comment type="subcellular location">
    <subcellularLocation>
        <location evidence="1">Cytoplasm</location>
    </subcellularLocation>
</comment>
<comment type="similarity">
    <text evidence="1">Belongs to the ATP phosphoribosyltransferase family. Long subfamily.</text>
</comment>
<keyword id="KW-0028">Amino-acid biosynthesis</keyword>
<keyword id="KW-0067">ATP-binding</keyword>
<keyword id="KW-0963">Cytoplasm</keyword>
<keyword id="KW-0328">Glycosyltransferase</keyword>
<keyword id="KW-0368">Histidine biosynthesis</keyword>
<keyword id="KW-0460">Magnesium</keyword>
<keyword id="KW-0479">Metal-binding</keyword>
<keyword id="KW-0547">Nucleotide-binding</keyword>
<keyword id="KW-1185">Reference proteome</keyword>
<keyword id="KW-0808">Transferase</keyword>
<reference key="1">
    <citation type="submission" date="2005-08" db="EMBL/GenBank/DDBJ databases">
        <title>Complete sequence of Pelodictyon luteolum DSM 273.</title>
        <authorList>
            <consortium name="US DOE Joint Genome Institute"/>
            <person name="Copeland A."/>
            <person name="Lucas S."/>
            <person name="Lapidus A."/>
            <person name="Barry K."/>
            <person name="Detter J.C."/>
            <person name="Glavina T."/>
            <person name="Hammon N."/>
            <person name="Israni S."/>
            <person name="Pitluck S."/>
            <person name="Bryant D."/>
            <person name="Schmutz J."/>
            <person name="Larimer F."/>
            <person name="Land M."/>
            <person name="Kyrpides N."/>
            <person name="Ivanova N."/>
            <person name="Richardson P."/>
        </authorList>
    </citation>
    <scope>NUCLEOTIDE SEQUENCE [LARGE SCALE GENOMIC DNA]</scope>
    <source>
        <strain>DSM 273 / BCRC 81028 / 2530</strain>
    </source>
</reference>
<protein>
    <recommendedName>
        <fullName evidence="1">ATP phosphoribosyltransferase</fullName>
        <shortName evidence="1">ATP-PRT</shortName>
        <shortName evidence="1">ATP-PRTase</shortName>
        <ecNumber evidence="1">2.4.2.17</ecNumber>
    </recommendedName>
</protein>
<name>HIS1_CHLL3</name>
<organism>
    <name type="scientific">Chlorobium luteolum (strain DSM 273 / BCRC 81028 / 2530)</name>
    <name type="common">Pelodictyon luteolum</name>
    <dbReference type="NCBI Taxonomy" id="319225"/>
    <lineage>
        <taxon>Bacteria</taxon>
        <taxon>Pseudomonadati</taxon>
        <taxon>Chlorobiota</taxon>
        <taxon>Chlorobiia</taxon>
        <taxon>Chlorobiales</taxon>
        <taxon>Chlorobiaceae</taxon>
        <taxon>Chlorobium/Pelodictyon group</taxon>
        <taxon>Pelodictyon</taxon>
    </lineage>
</organism>